<organism>
    <name type="scientific">Buchnera aphidicola subsp. Baizongia pistaciae (strain Bp)</name>
    <dbReference type="NCBI Taxonomy" id="224915"/>
    <lineage>
        <taxon>Bacteria</taxon>
        <taxon>Pseudomonadati</taxon>
        <taxon>Pseudomonadota</taxon>
        <taxon>Gammaproteobacteria</taxon>
        <taxon>Enterobacterales</taxon>
        <taxon>Erwiniaceae</taxon>
        <taxon>Buchnera</taxon>
    </lineage>
</organism>
<keyword id="KW-0030">Aminoacyl-tRNA synthetase</keyword>
<keyword id="KW-0067">ATP-binding</keyword>
<keyword id="KW-0963">Cytoplasm</keyword>
<keyword id="KW-0436">Ligase</keyword>
<keyword id="KW-0460">Magnesium</keyword>
<keyword id="KW-0479">Metal-binding</keyword>
<keyword id="KW-0547">Nucleotide-binding</keyword>
<keyword id="KW-0648">Protein biosynthesis</keyword>
<keyword id="KW-1185">Reference proteome</keyword>
<gene>
    <name evidence="1" type="primary">pheS</name>
    <name type="ordered locus">bbp_123</name>
</gene>
<protein>
    <recommendedName>
        <fullName evidence="1">Phenylalanine--tRNA ligase alpha subunit</fullName>
        <ecNumber evidence="1">6.1.1.20</ecNumber>
    </recommendedName>
    <alternativeName>
        <fullName evidence="1">Phenylalanyl-tRNA synthetase alpha subunit</fullName>
        <shortName evidence="1">PheRS</shortName>
    </alternativeName>
</protein>
<proteinExistence type="inferred from homology"/>
<accession>P59504</accession>
<name>SYFA_BUCBP</name>
<sequence length="328" mass="38219">MCDALKSIKKIKKEIQRTTTVEELKTLRIKYLGKKGYLASKMQKLFSLSLDKKKIYGSIINKFKSDLNIELDLHKKILDMIAVSSLNKKEKNFDVSLISRKNDIGTIHPITYVISSIENFFLKLGFSVITGFEIDDDYHNFDLLNIPKYHPARADHDTFWFDANRLLRTQTSNMQIRTMKNETPPIKIIVPGKVYRNDYDATHTPMFHQVEGLIVDHDVNFFHLKWIIEMFLKFFFNKTVKIRFKSSYFPFTVLSAEVDILGNNKKWLEVLGCGMIHPKVLSNANINPKMYSGCAFGIGVERITMLRYGISDIRVFYENNLKFLTQFK</sequence>
<evidence type="ECO:0000255" key="1">
    <source>
        <dbReference type="HAMAP-Rule" id="MF_00281"/>
    </source>
</evidence>
<evidence type="ECO:0000305" key="2"/>
<comment type="catalytic activity">
    <reaction evidence="1">
        <text>tRNA(Phe) + L-phenylalanine + ATP = L-phenylalanyl-tRNA(Phe) + AMP + diphosphate + H(+)</text>
        <dbReference type="Rhea" id="RHEA:19413"/>
        <dbReference type="Rhea" id="RHEA-COMP:9668"/>
        <dbReference type="Rhea" id="RHEA-COMP:9699"/>
        <dbReference type="ChEBI" id="CHEBI:15378"/>
        <dbReference type="ChEBI" id="CHEBI:30616"/>
        <dbReference type="ChEBI" id="CHEBI:33019"/>
        <dbReference type="ChEBI" id="CHEBI:58095"/>
        <dbReference type="ChEBI" id="CHEBI:78442"/>
        <dbReference type="ChEBI" id="CHEBI:78531"/>
        <dbReference type="ChEBI" id="CHEBI:456215"/>
        <dbReference type="EC" id="6.1.1.20"/>
    </reaction>
</comment>
<comment type="cofactor">
    <cofactor evidence="1">
        <name>Mg(2+)</name>
        <dbReference type="ChEBI" id="CHEBI:18420"/>
    </cofactor>
    <text evidence="1">Binds 2 magnesium ions per tetramer.</text>
</comment>
<comment type="subunit">
    <text evidence="1">Tetramer of two alpha and two beta subunits.</text>
</comment>
<comment type="subcellular location">
    <subcellularLocation>
        <location evidence="1">Cytoplasm</location>
    </subcellularLocation>
</comment>
<comment type="similarity">
    <text evidence="1">Belongs to the class-II aminoacyl-tRNA synthetase family. Phe-tRNA synthetase alpha subunit type 1 subfamily.</text>
</comment>
<comment type="caution">
    <text evidence="2">Lacks the conserved glutamate residue that binds magnesium.</text>
</comment>
<reference key="1">
    <citation type="journal article" date="2003" name="Proc. Natl. Acad. Sci. U.S.A.">
        <title>Reductive genome evolution in Buchnera aphidicola.</title>
        <authorList>
            <person name="van Ham R.C.H.J."/>
            <person name="Kamerbeek J."/>
            <person name="Palacios C."/>
            <person name="Rausell C."/>
            <person name="Abascal F."/>
            <person name="Bastolla U."/>
            <person name="Fernandez J.M."/>
            <person name="Jimenez L."/>
            <person name="Postigo M."/>
            <person name="Silva F.J."/>
            <person name="Tamames J."/>
            <person name="Viguera E."/>
            <person name="Latorre A."/>
            <person name="Valencia A."/>
            <person name="Moran F."/>
            <person name="Moya A."/>
        </authorList>
    </citation>
    <scope>NUCLEOTIDE SEQUENCE [LARGE SCALE GENOMIC DNA]</scope>
    <source>
        <strain>Bp</strain>
    </source>
</reference>
<dbReference type="EC" id="6.1.1.20" evidence="1"/>
<dbReference type="EMBL" id="AE016826">
    <property type="protein sequence ID" value="AAO26857.1"/>
    <property type="molecule type" value="Genomic_DNA"/>
</dbReference>
<dbReference type="RefSeq" id="WP_011091258.1">
    <property type="nucleotide sequence ID" value="NC_004545.1"/>
</dbReference>
<dbReference type="SMR" id="P59504"/>
<dbReference type="STRING" id="224915.bbp_123"/>
<dbReference type="KEGG" id="bab:bbp_123"/>
<dbReference type="eggNOG" id="COG0016">
    <property type="taxonomic scope" value="Bacteria"/>
</dbReference>
<dbReference type="HOGENOM" id="CLU_025086_0_1_6"/>
<dbReference type="OrthoDB" id="9800719at2"/>
<dbReference type="Proteomes" id="UP000000601">
    <property type="component" value="Chromosome"/>
</dbReference>
<dbReference type="GO" id="GO:0005737">
    <property type="term" value="C:cytoplasm"/>
    <property type="evidence" value="ECO:0007669"/>
    <property type="project" value="UniProtKB-SubCell"/>
</dbReference>
<dbReference type="GO" id="GO:0005524">
    <property type="term" value="F:ATP binding"/>
    <property type="evidence" value="ECO:0007669"/>
    <property type="project" value="UniProtKB-UniRule"/>
</dbReference>
<dbReference type="GO" id="GO:0000287">
    <property type="term" value="F:magnesium ion binding"/>
    <property type="evidence" value="ECO:0007669"/>
    <property type="project" value="UniProtKB-UniRule"/>
</dbReference>
<dbReference type="GO" id="GO:0004826">
    <property type="term" value="F:phenylalanine-tRNA ligase activity"/>
    <property type="evidence" value="ECO:0007669"/>
    <property type="project" value="UniProtKB-UniRule"/>
</dbReference>
<dbReference type="GO" id="GO:0000049">
    <property type="term" value="F:tRNA binding"/>
    <property type="evidence" value="ECO:0007669"/>
    <property type="project" value="InterPro"/>
</dbReference>
<dbReference type="GO" id="GO:0006432">
    <property type="term" value="P:phenylalanyl-tRNA aminoacylation"/>
    <property type="evidence" value="ECO:0007669"/>
    <property type="project" value="UniProtKB-UniRule"/>
</dbReference>
<dbReference type="CDD" id="cd00496">
    <property type="entry name" value="PheRS_alpha_core"/>
    <property type="match status" value="1"/>
</dbReference>
<dbReference type="Gene3D" id="3.30.930.10">
    <property type="entry name" value="Bira Bifunctional Protein, Domain 2"/>
    <property type="match status" value="1"/>
</dbReference>
<dbReference type="HAMAP" id="MF_00281">
    <property type="entry name" value="Phe_tRNA_synth_alpha1"/>
    <property type="match status" value="1"/>
</dbReference>
<dbReference type="InterPro" id="IPR006195">
    <property type="entry name" value="aa-tRNA-synth_II"/>
</dbReference>
<dbReference type="InterPro" id="IPR045864">
    <property type="entry name" value="aa-tRNA-synth_II/BPL/LPL"/>
</dbReference>
<dbReference type="InterPro" id="IPR004529">
    <property type="entry name" value="Phe-tRNA-synth_IIc_asu"/>
</dbReference>
<dbReference type="InterPro" id="IPR004188">
    <property type="entry name" value="Phe-tRNA_ligase_II_N"/>
</dbReference>
<dbReference type="InterPro" id="IPR022911">
    <property type="entry name" value="Phe_tRNA_ligase_alpha1_bac"/>
</dbReference>
<dbReference type="InterPro" id="IPR002319">
    <property type="entry name" value="Phenylalanyl-tRNA_Synthase"/>
</dbReference>
<dbReference type="InterPro" id="IPR010978">
    <property type="entry name" value="tRNA-bd_arm"/>
</dbReference>
<dbReference type="NCBIfam" id="TIGR00468">
    <property type="entry name" value="pheS"/>
    <property type="match status" value="1"/>
</dbReference>
<dbReference type="PANTHER" id="PTHR11538:SF41">
    <property type="entry name" value="PHENYLALANINE--TRNA LIGASE, MITOCHONDRIAL"/>
    <property type="match status" value="1"/>
</dbReference>
<dbReference type="PANTHER" id="PTHR11538">
    <property type="entry name" value="PHENYLALANYL-TRNA SYNTHETASE"/>
    <property type="match status" value="1"/>
</dbReference>
<dbReference type="Pfam" id="PF02912">
    <property type="entry name" value="Phe_tRNA-synt_N"/>
    <property type="match status" value="1"/>
</dbReference>
<dbReference type="Pfam" id="PF01409">
    <property type="entry name" value="tRNA-synt_2d"/>
    <property type="match status" value="1"/>
</dbReference>
<dbReference type="SUPFAM" id="SSF55681">
    <property type="entry name" value="Class II aaRS and biotin synthetases"/>
    <property type="match status" value="1"/>
</dbReference>
<dbReference type="SUPFAM" id="SSF46589">
    <property type="entry name" value="tRNA-binding arm"/>
    <property type="match status" value="1"/>
</dbReference>
<dbReference type="PROSITE" id="PS50862">
    <property type="entry name" value="AA_TRNA_LIGASE_II"/>
    <property type="match status" value="1"/>
</dbReference>
<feature type="chain" id="PRO_0000126678" description="Phenylalanine--tRNA ligase alpha subunit">
    <location>
        <begin position="1"/>
        <end position="328"/>
    </location>
</feature>